<keyword id="KW-1185">Reference proteome</keyword>
<organism>
    <name type="scientific">Photorhabdus laumondii subsp. laumondii (strain DSM 15139 / CIP 105565 / TT01)</name>
    <name type="common">Photorhabdus luminescens subsp. laumondii</name>
    <dbReference type="NCBI Taxonomy" id="243265"/>
    <lineage>
        <taxon>Bacteria</taxon>
        <taxon>Pseudomonadati</taxon>
        <taxon>Pseudomonadota</taxon>
        <taxon>Gammaproteobacteria</taxon>
        <taxon>Enterobacterales</taxon>
        <taxon>Morganellaceae</taxon>
        <taxon>Photorhabdus</taxon>
    </lineage>
</organism>
<sequence>MNLQHHFLIAMPSLSDPYFKRSVVYICEHNANGAMGLVINKPIEQISVRKVLQKLKISPEDRDESVNLNKPVMTGGPLAEDHGFILHTPKPGFSSSIKISDDTMITTSKDVLETLGTPRQPKQILVTLGYTSWEKGQLEKEIMENSWLTTNADPHIIFNSPIADRWREAASLLGINIYNIAPQAGHA</sequence>
<comment type="similarity">
    <text evidence="1">Belongs to the UPF0301 (AlgH) family.</text>
</comment>
<reference key="1">
    <citation type="journal article" date="2003" name="Nat. Biotechnol.">
        <title>The genome sequence of the entomopathogenic bacterium Photorhabdus luminescens.</title>
        <authorList>
            <person name="Duchaud E."/>
            <person name="Rusniok C."/>
            <person name="Frangeul L."/>
            <person name="Buchrieser C."/>
            <person name="Givaudan A."/>
            <person name="Taourit S."/>
            <person name="Bocs S."/>
            <person name="Boursaux-Eude C."/>
            <person name="Chandler M."/>
            <person name="Charles J.-F."/>
            <person name="Dassa E."/>
            <person name="Derose R."/>
            <person name="Derzelle S."/>
            <person name="Freyssinet G."/>
            <person name="Gaudriault S."/>
            <person name="Medigue C."/>
            <person name="Lanois A."/>
            <person name="Powell K."/>
            <person name="Siguier P."/>
            <person name="Vincent R."/>
            <person name="Wingate V."/>
            <person name="Zouine M."/>
            <person name="Glaser P."/>
            <person name="Boemare N."/>
            <person name="Danchin A."/>
            <person name="Kunst F."/>
        </authorList>
    </citation>
    <scope>NUCLEOTIDE SEQUENCE [LARGE SCALE GENOMIC DNA]</scope>
    <source>
        <strain>DSM 15139 / CIP 105565 / TT01</strain>
    </source>
</reference>
<proteinExistence type="inferred from homology"/>
<accession>Q7N7G6</accession>
<evidence type="ECO:0000255" key="1">
    <source>
        <dbReference type="HAMAP-Rule" id="MF_00758"/>
    </source>
</evidence>
<protein>
    <recommendedName>
        <fullName evidence="1">UPF0301 protein plu1183</fullName>
    </recommendedName>
</protein>
<name>Y1183_PHOLL</name>
<gene>
    <name type="ordered locus">plu1183</name>
</gene>
<feature type="chain" id="PRO_0000214335" description="UPF0301 protein plu1183">
    <location>
        <begin position="1"/>
        <end position="187"/>
    </location>
</feature>
<dbReference type="EMBL" id="BX571862">
    <property type="protein sequence ID" value="CAE13477.1"/>
    <property type="molecule type" value="Genomic_DNA"/>
</dbReference>
<dbReference type="RefSeq" id="WP_011145510.1">
    <property type="nucleotide sequence ID" value="NC_005126.1"/>
</dbReference>
<dbReference type="SMR" id="Q7N7G6"/>
<dbReference type="STRING" id="243265.plu1183"/>
<dbReference type="GeneID" id="48847453"/>
<dbReference type="KEGG" id="plu:plu1183"/>
<dbReference type="eggNOG" id="COG1678">
    <property type="taxonomic scope" value="Bacteria"/>
</dbReference>
<dbReference type="HOGENOM" id="CLU_057596_1_0_6"/>
<dbReference type="OrthoDB" id="9807486at2"/>
<dbReference type="Proteomes" id="UP000002514">
    <property type="component" value="Chromosome"/>
</dbReference>
<dbReference type="GO" id="GO:0005829">
    <property type="term" value="C:cytosol"/>
    <property type="evidence" value="ECO:0007669"/>
    <property type="project" value="TreeGrafter"/>
</dbReference>
<dbReference type="Gene3D" id="3.40.1740.10">
    <property type="entry name" value="VC0467-like"/>
    <property type="match status" value="1"/>
</dbReference>
<dbReference type="HAMAP" id="MF_00758">
    <property type="entry name" value="UPF0301"/>
    <property type="match status" value="1"/>
</dbReference>
<dbReference type="InterPro" id="IPR003774">
    <property type="entry name" value="AlgH-like"/>
</dbReference>
<dbReference type="NCBIfam" id="NF001266">
    <property type="entry name" value="PRK00228.1-1"/>
    <property type="match status" value="1"/>
</dbReference>
<dbReference type="PANTHER" id="PTHR30327">
    <property type="entry name" value="UNCHARACTERIZED PROTEIN YQGE"/>
    <property type="match status" value="1"/>
</dbReference>
<dbReference type="PANTHER" id="PTHR30327:SF1">
    <property type="entry name" value="UPF0301 PROTEIN YQGE"/>
    <property type="match status" value="1"/>
</dbReference>
<dbReference type="Pfam" id="PF02622">
    <property type="entry name" value="DUF179"/>
    <property type="match status" value="1"/>
</dbReference>
<dbReference type="SUPFAM" id="SSF143456">
    <property type="entry name" value="VC0467-like"/>
    <property type="match status" value="1"/>
</dbReference>